<reference key="1">
    <citation type="journal article" date="2005" name="Proc. Natl. Acad. Sci. U.S.A.">
        <title>Comparison of the complete genome sequences of Pseudomonas syringae pv. syringae B728a and pv. tomato DC3000.</title>
        <authorList>
            <person name="Feil H."/>
            <person name="Feil W.S."/>
            <person name="Chain P."/>
            <person name="Larimer F."/>
            <person name="Dibartolo G."/>
            <person name="Copeland A."/>
            <person name="Lykidis A."/>
            <person name="Trong S."/>
            <person name="Nolan M."/>
            <person name="Goltsman E."/>
            <person name="Thiel J."/>
            <person name="Malfatti S."/>
            <person name="Loper J.E."/>
            <person name="Lapidus A."/>
            <person name="Detter J.C."/>
            <person name="Land M."/>
            <person name="Richardson P.M."/>
            <person name="Kyrpides N.C."/>
            <person name="Ivanova N."/>
            <person name="Lindow S.E."/>
        </authorList>
    </citation>
    <scope>NUCLEOTIDE SEQUENCE [LARGE SCALE GENOMIC DNA]</scope>
    <source>
        <strain>B728a</strain>
    </source>
</reference>
<dbReference type="EC" id="7.6.2.-" evidence="2"/>
<dbReference type="EMBL" id="CP000075">
    <property type="protein sequence ID" value="AAY37657.1"/>
    <property type="molecule type" value="Genomic_DNA"/>
</dbReference>
<dbReference type="RefSeq" id="WP_011267827.1">
    <property type="nucleotide sequence ID" value="NC_007005.1"/>
</dbReference>
<dbReference type="RefSeq" id="YP_235695.1">
    <property type="nucleotide sequence ID" value="NC_007005.1"/>
</dbReference>
<dbReference type="SMR" id="Q4ZT65"/>
<dbReference type="STRING" id="205918.Psyr_2618"/>
<dbReference type="KEGG" id="psb:Psyr_2618"/>
<dbReference type="PATRIC" id="fig|205918.7.peg.2682"/>
<dbReference type="eggNOG" id="COG0577">
    <property type="taxonomic scope" value="Bacteria"/>
</dbReference>
<dbReference type="eggNOG" id="COG1136">
    <property type="taxonomic scope" value="Bacteria"/>
</dbReference>
<dbReference type="HOGENOM" id="CLU_000604_78_2_6"/>
<dbReference type="OrthoDB" id="9770036at2"/>
<dbReference type="Proteomes" id="UP000000426">
    <property type="component" value="Chromosome"/>
</dbReference>
<dbReference type="GO" id="GO:0005886">
    <property type="term" value="C:plasma membrane"/>
    <property type="evidence" value="ECO:0007669"/>
    <property type="project" value="UniProtKB-SubCell"/>
</dbReference>
<dbReference type="GO" id="GO:0005524">
    <property type="term" value="F:ATP binding"/>
    <property type="evidence" value="ECO:0007669"/>
    <property type="project" value="UniProtKB-KW"/>
</dbReference>
<dbReference type="GO" id="GO:0016887">
    <property type="term" value="F:ATP hydrolysis activity"/>
    <property type="evidence" value="ECO:0007669"/>
    <property type="project" value="InterPro"/>
</dbReference>
<dbReference type="GO" id="GO:0022857">
    <property type="term" value="F:transmembrane transporter activity"/>
    <property type="evidence" value="ECO:0007669"/>
    <property type="project" value="TreeGrafter"/>
</dbReference>
<dbReference type="CDD" id="cd03255">
    <property type="entry name" value="ABC_MJ0796_LolCDE_FtsE"/>
    <property type="match status" value="1"/>
</dbReference>
<dbReference type="FunFam" id="3.40.50.300:FF:000032">
    <property type="entry name" value="Export ABC transporter ATP-binding protein"/>
    <property type="match status" value="1"/>
</dbReference>
<dbReference type="Gene3D" id="3.40.50.300">
    <property type="entry name" value="P-loop containing nucleotide triphosphate hydrolases"/>
    <property type="match status" value="1"/>
</dbReference>
<dbReference type="InterPro" id="IPR003593">
    <property type="entry name" value="AAA+_ATPase"/>
</dbReference>
<dbReference type="InterPro" id="IPR003838">
    <property type="entry name" value="ABC3_permease_C"/>
</dbReference>
<dbReference type="InterPro" id="IPR003439">
    <property type="entry name" value="ABC_transporter-like_ATP-bd"/>
</dbReference>
<dbReference type="InterPro" id="IPR017871">
    <property type="entry name" value="ABC_transporter-like_CS"/>
</dbReference>
<dbReference type="InterPro" id="IPR017911">
    <property type="entry name" value="MacB-like_ATP-bd"/>
</dbReference>
<dbReference type="InterPro" id="IPR025857">
    <property type="entry name" value="MacB_PCD"/>
</dbReference>
<dbReference type="InterPro" id="IPR050250">
    <property type="entry name" value="Macrolide_Exporter_MacB"/>
</dbReference>
<dbReference type="InterPro" id="IPR027417">
    <property type="entry name" value="P-loop_NTPase"/>
</dbReference>
<dbReference type="PANTHER" id="PTHR30572:SF7">
    <property type="entry name" value="MACROLIDE EXPORT ATP-BINDING_PERMEASE PROTEIN MACB"/>
    <property type="match status" value="1"/>
</dbReference>
<dbReference type="PANTHER" id="PTHR30572">
    <property type="entry name" value="MEMBRANE COMPONENT OF TRANSPORTER-RELATED"/>
    <property type="match status" value="1"/>
</dbReference>
<dbReference type="Pfam" id="PF00005">
    <property type="entry name" value="ABC_tran"/>
    <property type="match status" value="1"/>
</dbReference>
<dbReference type="Pfam" id="PF02687">
    <property type="entry name" value="FtsX"/>
    <property type="match status" value="1"/>
</dbReference>
<dbReference type="Pfam" id="PF12704">
    <property type="entry name" value="MacB_PCD"/>
    <property type="match status" value="1"/>
</dbReference>
<dbReference type="SMART" id="SM00382">
    <property type="entry name" value="AAA"/>
    <property type="match status" value="1"/>
</dbReference>
<dbReference type="SUPFAM" id="SSF52540">
    <property type="entry name" value="P-loop containing nucleoside triphosphate hydrolases"/>
    <property type="match status" value="1"/>
</dbReference>
<dbReference type="PROSITE" id="PS00211">
    <property type="entry name" value="ABC_TRANSPORTER_1"/>
    <property type="match status" value="1"/>
</dbReference>
<dbReference type="PROSITE" id="PS50893">
    <property type="entry name" value="ABC_TRANSPORTER_2"/>
    <property type="match status" value="1"/>
</dbReference>
<dbReference type="PROSITE" id="PS51267">
    <property type="entry name" value="MACB"/>
    <property type="match status" value="1"/>
</dbReference>
<sequence>MSRALLELNGVTRRFVAGEKDFIALNDINLTINAGELVAITGASGSGKSTLMNVLGCLDHPNSGSYKVDGRETGTLTDDELAELRRDHFGFIFQRYHLLPHLAAIQNVEMPAIYAGTGKGMRVERAQKLLERLGLSGHLEHRPSQLSGGQQQRVSIARALMNGGEIILADEPTGALDSVSGKEVMNILLELNSAGHTVILVTHDEKVAAHAERIIEMRDGEIIADRVNTDRPIINEKTTERLPTKPRQGNRLMANIGLFQEAFVMAWVALISHRMRTLLTMLGIIIGITSVVSIVAIGEGAKRYVLKDIQAIGSNTIEVFPGSDFGDTKSMDIQTLALSDVAALSSEYYIDSATPNIGRNLLVRYRNIDVSATVSGVSPSYFQVRGTKMGLGVGFNKDDARRQAQVVVIDHNTRIRLFGPKVDPLGQVILVGNLPCTVIGVTENKKNIFDTSKNLNIWMPYETASGRLLGQTYLDGITVRVKDGQPSKVVEDNVNKLLQKRHGTKDFFTYNLDSVMQTVQKTSQSLALLLSLIAVISLAVGGIGVMNIMLVSVTERTREIGIRMAVGARQSDIRQQFLVEAVMVCLIGGVIGISLSFVIGYVFSLLVKEWQMVFSLGSIVTAFICSTLIGIVFGFVPARNAAQLDPIEALARD</sequence>
<organism>
    <name type="scientific">Pseudomonas syringae pv. syringae (strain B728a)</name>
    <dbReference type="NCBI Taxonomy" id="205918"/>
    <lineage>
        <taxon>Bacteria</taxon>
        <taxon>Pseudomonadati</taxon>
        <taxon>Pseudomonadota</taxon>
        <taxon>Gammaproteobacteria</taxon>
        <taxon>Pseudomonadales</taxon>
        <taxon>Pseudomonadaceae</taxon>
        <taxon>Pseudomonas</taxon>
        <taxon>Pseudomonas syringae</taxon>
    </lineage>
</organism>
<proteinExistence type="inferred from homology"/>
<name>SYFD_PSEU2</name>
<comment type="function">
    <text evidence="2">Probably involved in the export of syringafactins.</text>
</comment>
<comment type="subunit">
    <text evidence="1">Probably part of a tripartite efflux system, which is composed of an inner membrane transporter, a periplasmic membrane fusion protein, and an outer membrane component.</text>
</comment>
<comment type="subcellular location">
    <subcellularLocation>
        <location evidence="1">Cell inner membrane</location>
        <topology evidence="3">Multi-pass membrane protein</topology>
    </subcellularLocation>
</comment>
<comment type="similarity">
    <text evidence="5">Belongs to the ABC transporter superfamily. Macrolide exporter (TC 3.A.1.122) family.</text>
</comment>
<keyword id="KW-0067">ATP-binding</keyword>
<keyword id="KW-0997">Cell inner membrane</keyword>
<keyword id="KW-1003">Cell membrane</keyword>
<keyword id="KW-0472">Membrane</keyword>
<keyword id="KW-0547">Nucleotide-binding</keyword>
<keyword id="KW-1278">Translocase</keyword>
<keyword id="KW-0812">Transmembrane</keyword>
<keyword id="KW-1133">Transmembrane helix</keyword>
<keyword id="KW-0813">Transport</keyword>
<accession>Q4ZT65</accession>
<feature type="chain" id="PRO_0000269964" description="Probable syringafactin export ATP-binding/permease protein SyfD">
    <location>
        <begin position="1"/>
        <end position="653"/>
    </location>
</feature>
<feature type="transmembrane region" description="Helical" evidence="3">
    <location>
        <begin position="252"/>
        <end position="272"/>
    </location>
</feature>
<feature type="transmembrane region" description="Helical" evidence="3">
    <location>
        <begin position="278"/>
        <end position="298"/>
    </location>
</feature>
<feature type="transmembrane region" description="Helical" evidence="3">
    <location>
        <begin position="526"/>
        <end position="546"/>
    </location>
</feature>
<feature type="transmembrane region" description="Helical" evidence="3">
    <location>
        <begin position="583"/>
        <end position="603"/>
    </location>
</feature>
<feature type="transmembrane region" description="Helical" evidence="3">
    <location>
        <begin position="616"/>
        <end position="636"/>
    </location>
</feature>
<feature type="domain" description="ABC transporter" evidence="4">
    <location>
        <begin position="6"/>
        <end position="244"/>
    </location>
</feature>
<feature type="binding site" evidence="4">
    <location>
        <begin position="42"/>
        <end position="49"/>
    </location>
    <ligand>
        <name>ATP</name>
        <dbReference type="ChEBI" id="CHEBI:30616"/>
    </ligand>
</feature>
<gene>
    <name evidence="2" type="primary">syfD</name>
    <name evidence="6" type="ordered locus">Psyr_2618</name>
</gene>
<protein>
    <recommendedName>
        <fullName evidence="2">Probable syringafactin export ATP-binding/permease protein SyfD</fullName>
        <ecNumber evidence="2">7.6.2.-</ecNumber>
    </recommendedName>
</protein>
<evidence type="ECO:0000250" key="1">
    <source>
        <dbReference type="UniProtKB" id="P75831"/>
    </source>
</evidence>
<evidence type="ECO:0000250" key="2">
    <source>
        <dbReference type="UniProtKB" id="Q881Q1"/>
    </source>
</evidence>
<evidence type="ECO:0000255" key="3"/>
<evidence type="ECO:0000255" key="4">
    <source>
        <dbReference type="PROSITE-ProRule" id="PRU00434"/>
    </source>
</evidence>
<evidence type="ECO:0000305" key="5"/>
<evidence type="ECO:0000312" key="6">
    <source>
        <dbReference type="EMBL" id="AAY37657.1"/>
    </source>
</evidence>